<protein>
    <recommendedName>
        <fullName evidence="1">Small ribosomal subunit protein uS11</fullName>
    </recommendedName>
    <alternativeName>
        <fullName evidence="2">30S ribosomal protein S11</fullName>
    </alternativeName>
</protein>
<name>RS11_YERP3</name>
<reference key="1">
    <citation type="journal article" date="2007" name="PLoS Genet.">
        <title>The complete genome sequence of Yersinia pseudotuberculosis IP31758, the causative agent of Far East scarlet-like fever.</title>
        <authorList>
            <person name="Eppinger M."/>
            <person name="Rosovitz M.J."/>
            <person name="Fricke W.F."/>
            <person name="Rasko D.A."/>
            <person name="Kokorina G."/>
            <person name="Fayolle C."/>
            <person name="Lindler L.E."/>
            <person name="Carniel E."/>
            <person name="Ravel J."/>
        </authorList>
    </citation>
    <scope>NUCLEOTIDE SEQUENCE [LARGE SCALE GENOMIC DNA]</scope>
    <source>
        <strain>IP 31758</strain>
    </source>
</reference>
<organism>
    <name type="scientific">Yersinia pseudotuberculosis serotype O:1b (strain IP 31758)</name>
    <dbReference type="NCBI Taxonomy" id="349747"/>
    <lineage>
        <taxon>Bacteria</taxon>
        <taxon>Pseudomonadati</taxon>
        <taxon>Pseudomonadota</taxon>
        <taxon>Gammaproteobacteria</taxon>
        <taxon>Enterobacterales</taxon>
        <taxon>Yersiniaceae</taxon>
        <taxon>Yersinia</taxon>
    </lineage>
</organism>
<evidence type="ECO:0000255" key="1">
    <source>
        <dbReference type="HAMAP-Rule" id="MF_01310"/>
    </source>
</evidence>
<evidence type="ECO:0000305" key="2"/>
<proteinExistence type="inferred from homology"/>
<accession>A7FNL2</accession>
<gene>
    <name evidence="1" type="primary">rpsK</name>
    <name type="ordered locus">YpsIP31758_3892</name>
</gene>
<keyword id="KW-0687">Ribonucleoprotein</keyword>
<keyword id="KW-0689">Ribosomal protein</keyword>
<keyword id="KW-0694">RNA-binding</keyword>
<keyword id="KW-0699">rRNA-binding</keyword>
<sequence length="129" mass="13832">MAKAPIRARKRVRKTVSDGVAHIHASFNNTIVTITDRQGNALGWATAGGSGFRGSRKSTPFAAQVAAERCAEAVKEYGIKNLEVMVKGPGPGRESTIRALNAAGFRITNITDVTPIPHNGCRPPKKRRV</sequence>
<comment type="function">
    <text evidence="1">Located on the platform of the 30S subunit, it bridges several disparate RNA helices of the 16S rRNA. Forms part of the Shine-Dalgarno cleft in the 70S ribosome.</text>
</comment>
<comment type="subunit">
    <text evidence="1">Part of the 30S ribosomal subunit. Interacts with proteins S7 and S18. Binds to IF-3.</text>
</comment>
<comment type="similarity">
    <text evidence="1">Belongs to the universal ribosomal protein uS11 family.</text>
</comment>
<feature type="chain" id="PRO_1000067506" description="Small ribosomal subunit protein uS11">
    <location>
        <begin position="1"/>
        <end position="129"/>
    </location>
</feature>
<dbReference type="EMBL" id="CP000720">
    <property type="protein sequence ID" value="ABS48088.1"/>
    <property type="molecule type" value="Genomic_DNA"/>
</dbReference>
<dbReference type="RefSeq" id="WP_002218948.1">
    <property type="nucleotide sequence ID" value="NC_009708.1"/>
</dbReference>
<dbReference type="SMR" id="A7FNL2"/>
<dbReference type="GeneID" id="96663173"/>
<dbReference type="KEGG" id="ypi:YpsIP31758_3892"/>
<dbReference type="HOGENOM" id="CLU_072439_5_0_6"/>
<dbReference type="Proteomes" id="UP000002412">
    <property type="component" value="Chromosome"/>
</dbReference>
<dbReference type="GO" id="GO:1990904">
    <property type="term" value="C:ribonucleoprotein complex"/>
    <property type="evidence" value="ECO:0007669"/>
    <property type="project" value="UniProtKB-KW"/>
</dbReference>
<dbReference type="GO" id="GO:0005840">
    <property type="term" value="C:ribosome"/>
    <property type="evidence" value="ECO:0007669"/>
    <property type="project" value="UniProtKB-KW"/>
</dbReference>
<dbReference type="GO" id="GO:0019843">
    <property type="term" value="F:rRNA binding"/>
    <property type="evidence" value="ECO:0007669"/>
    <property type="project" value="UniProtKB-UniRule"/>
</dbReference>
<dbReference type="GO" id="GO:0003735">
    <property type="term" value="F:structural constituent of ribosome"/>
    <property type="evidence" value="ECO:0007669"/>
    <property type="project" value="InterPro"/>
</dbReference>
<dbReference type="GO" id="GO:0006412">
    <property type="term" value="P:translation"/>
    <property type="evidence" value="ECO:0007669"/>
    <property type="project" value="UniProtKB-UniRule"/>
</dbReference>
<dbReference type="FunFam" id="3.30.420.80:FF:000001">
    <property type="entry name" value="30S ribosomal protein S11"/>
    <property type="match status" value="1"/>
</dbReference>
<dbReference type="Gene3D" id="3.30.420.80">
    <property type="entry name" value="Ribosomal protein S11"/>
    <property type="match status" value="1"/>
</dbReference>
<dbReference type="HAMAP" id="MF_01310">
    <property type="entry name" value="Ribosomal_uS11"/>
    <property type="match status" value="1"/>
</dbReference>
<dbReference type="InterPro" id="IPR001971">
    <property type="entry name" value="Ribosomal_uS11"/>
</dbReference>
<dbReference type="InterPro" id="IPR019981">
    <property type="entry name" value="Ribosomal_uS11_bac-type"/>
</dbReference>
<dbReference type="InterPro" id="IPR018102">
    <property type="entry name" value="Ribosomal_uS11_CS"/>
</dbReference>
<dbReference type="InterPro" id="IPR036967">
    <property type="entry name" value="Ribosomal_uS11_sf"/>
</dbReference>
<dbReference type="NCBIfam" id="NF003698">
    <property type="entry name" value="PRK05309.1"/>
    <property type="match status" value="1"/>
</dbReference>
<dbReference type="NCBIfam" id="TIGR03632">
    <property type="entry name" value="uS11_bact"/>
    <property type="match status" value="1"/>
</dbReference>
<dbReference type="PANTHER" id="PTHR11759">
    <property type="entry name" value="40S RIBOSOMAL PROTEIN S14/30S RIBOSOMAL PROTEIN S11"/>
    <property type="match status" value="1"/>
</dbReference>
<dbReference type="Pfam" id="PF00411">
    <property type="entry name" value="Ribosomal_S11"/>
    <property type="match status" value="1"/>
</dbReference>
<dbReference type="PIRSF" id="PIRSF002131">
    <property type="entry name" value="Ribosomal_S11"/>
    <property type="match status" value="1"/>
</dbReference>
<dbReference type="SUPFAM" id="SSF53137">
    <property type="entry name" value="Translational machinery components"/>
    <property type="match status" value="1"/>
</dbReference>
<dbReference type="PROSITE" id="PS00054">
    <property type="entry name" value="RIBOSOMAL_S11"/>
    <property type="match status" value="1"/>
</dbReference>